<gene>
    <name type="primary">mdtD</name>
    <name type="synonym">yegB</name>
    <name type="ordered locus">b2077</name>
    <name type="ordered locus">JW2062</name>
</gene>
<dbReference type="EMBL" id="AB089190">
    <property type="protein sequence ID" value="BAC06610.1"/>
    <property type="molecule type" value="Genomic_DNA"/>
</dbReference>
<dbReference type="EMBL" id="U00096">
    <property type="protein sequence ID" value="AAC75138.1"/>
    <property type="molecule type" value="Genomic_DNA"/>
</dbReference>
<dbReference type="EMBL" id="AP009048">
    <property type="protein sequence ID" value="BAA15933.1"/>
    <property type="molecule type" value="Genomic_DNA"/>
</dbReference>
<dbReference type="EMBL" id="D14054">
    <property type="protein sequence ID" value="BAA03139.1"/>
    <property type="molecule type" value="Genomic_DNA"/>
</dbReference>
<dbReference type="PIR" id="D64974">
    <property type="entry name" value="D64974"/>
</dbReference>
<dbReference type="RefSeq" id="NP_416581.1">
    <property type="nucleotide sequence ID" value="NC_000913.3"/>
</dbReference>
<dbReference type="RefSeq" id="WP_000130850.1">
    <property type="nucleotide sequence ID" value="NZ_SSZK01000011.1"/>
</dbReference>
<dbReference type="SMR" id="P36554"/>
<dbReference type="BioGRID" id="4260425">
    <property type="interactions" value="175"/>
</dbReference>
<dbReference type="DIP" id="DIP-11876N"/>
<dbReference type="FunCoup" id="P36554">
    <property type="interactions" value="547"/>
</dbReference>
<dbReference type="IntAct" id="P36554">
    <property type="interactions" value="2"/>
</dbReference>
<dbReference type="STRING" id="511145.b2077"/>
<dbReference type="TCDB" id="2.A.1.3.26">
    <property type="family name" value="the major facilitator superfamily (mfs)"/>
</dbReference>
<dbReference type="PaxDb" id="511145-b2077"/>
<dbReference type="EnsemblBacteria" id="AAC75138">
    <property type="protein sequence ID" value="AAC75138"/>
    <property type="gene ID" value="b2077"/>
</dbReference>
<dbReference type="GeneID" id="946601"/>
<dbReference type="KEGG" id="ecj:JW2062"/>
<dbReference type="KEGG" id="eco:b2077"/>
<dbReference type="KEGG" id="ecoc:C3026_11680"/>
<dbReference type="PATRIC" id="fig|1411691.4.peg.173"/>
<dbReference type="EchoBASE" id="EB2057"/>
<dbReference type="eggNOG" id="COG2814">
    <property type="taxonomic scope" value="Bacteria"/>
</dbReference>
<dbReference type="HOGENOM" id="CLU_000960_28_0_6"/>
<dbReference type="InParanoid" id="P36554"/>
<dbReference type="OMA" id="GCTMMPL"/>
<dbReference type="OrthoDB" id="9812221at2"/>
<dbReference type="PhylomeDB" id="P36554"/>
<dbReference type="BioCyc" id="EcoCyc:B2077-MONOMER"/>
<dbReference type="PRO" id="PR:P36554"/>
<dbReference type="Proteomes" id="UP000000625">
    <property type="component" value="Chromosome"/>
</dbReference>
<dbReference type="GO" id="GO:0005886">
    <property type="term" value="C:plasma membrane"/>
    <property type="evidence" value="ECO:0000314"/>
    <property type="project" value="EcoCyc"/>
</dbReference>
<dbReference type="GO" id="GO:0022857">
    <property type="term" value="F:transmembrane transporter activity"/>
    <property type="evidence" value="ECO:0000318"/>
    <property type="project" value="GO_Central"/>
</dbReference>
<dbReference type="GO" id="GO:0055085">
    <property type="term" value="P:transmembrane transport"/>
    <property type="evidence" value="ECO:0000318"/>
    <property type="project" value="GO_Central"/>
</dbReference>
<dbReference type="CDD" id="cd17503">
    <property type="entry name" value="MFS_LmrB_MDR_like"/>
    <property type="match status" value="1"/>
</dbReference>
<dbReference type="FunFam" id="1.20.1250.20:FF:000021">
    <property type="entry name" value="Putative multidrug resistance protein MdtD"/>
    <property type="match status" value="1"/>
</dbReference>
<dbReference type="FunFam" id="1.20.1720.10:FF:000001">
    <property type="entry name" value="Putative multidrug resistance protein MdtD"/>
    <property type="match status" value="1"/>
</dbReference>
<dbReference type="Gene3D" id="1.20.1250.20">
    <property type="entry name" value="MFS general substrate transporter like domains"/>
    <property type="match status" value="1"/>
</dbReference>
<dbReference type="Gene3D" id="1.20.1720.10">
    <property type="entry name" value="Multidrug resistance protein D"/>
    <property type="match status" value="1"/>
</dbReference>
<dbReference type="HAMAP" id="MF_01577">
    <property type="entry name" value="MFS_MdtD"/>
    <property type="match status" value="1"/>
</dbReference>
<dbReference type="InterPro" id="IPR004638">
    <property type="entry name" value="EmrB-like"/>
</dbReference>
<dbReference type="InterPro" id="IPR011701">
    <property type="entry name" value="MFS"/>
</dbReference>
<dbReference type="InterPro" id="IPR020846">
    <property type="entry name" value="MFS_dom"/>
</dbReference>
<dbReference type="InterPro" id="IPR036259">
    <property type="entry name" value="MFS_trans_sf"/>
</dbReference>
<dbReference type="InterPro" id="IPR023721">
    <property type="entry name" value="Multi-R_MdtD"/>
</dbReference>
<dbReference type="NCBIfam" id="TIGR00711">
    <property type="entry name" value="efflux_EmrB"/>
    <property type="match status" value="1"/>
</dbReference>
<dbReference type="NCBIfam" id="NF007799">
    <property type="entry name" value="PRK10504.1"/>
    <property type="match status" value="1"/>
</dbReference>
<dbReference type="PANTHER" id="PTHR42718:SF46">
    <property type="entry name" value="BLR6921 PROTEIN"/>
    <property type="match status" value="1"/>
</dbReference>
<dbReference type="PANTHER" id="PTHR42718">
    <property type="entry name" value="MAJOR FACILITATOR SUPERFAMILY MULTIDRUG TRANSPORTER MFSC"/>
    <property type="match status" value="1"/>
</dbReference>
<dbReference type="Pfam" id="PF07690">
    <property type="entry name" value="MFS_1"/>
    <property type="match status" value="1"/>
</dbReference>
<dbReference type="PRINTS" id="PR01036">
    <property type="entry name" value="TCRTETB"/>
</dbReference>
<dbReference type="SUPFAM" id="SSF103473">
    <property type="entry name" value="MFS general substrate transporter"/>
    <property type="match status" value="1"/>
</dbReference>
<dbReference type="PROSITE" id="PS50850">
    <property type="entry name" value="MFS"/>
    <property type="match status" value="1"/>
</dbReference>
<reference key="1">
    <citation type="journal article" date="2002" name="J. Bacteriol.">
        <title>The putative response regulator BaeR stimulates multidrug resistance of Escherichia coli via a novel multidrug exporter system, MdtABC.</title>
        <authorList>
            <person name="Nagakubo S."/>
            <person name="Nishino K."/>
            <person name="Hirata T."/>
            <person name="Yamaguchi A."/>
        </authorList>
    </citation>
    <scope>NUCLEOTIDE SEQUENCE [GENOMIC DNA]</scope>
    <scope>INDUCTION</scope>
    <source>
        <strain>K12</strain>
    </source>
</reference>
<reference key="2">
    <citation type="journal article" date="1996" name="DNA Res.">
        <title>A 460-kb DNA sequence of the Escherichia coli K-12 genome corresponding to the 40.1-50.0 min region on the linkage map.</title>
        <authorList>
            <person name="Itoh T."/>
            <person name="Aiba H."/>
            <person name="Baba T."/>
            <person name="Fujita K."/>
            <person name="Hayashi K."/>
            <person name="Inada T."/>
            <person name="Isono K."/>
            <person name="Kasai H."/>
            <person name="Kimura S."/>
            <person name="Kitakawa M."/>
            <person name="Kitagawa M."/>
            <person name="Makino K."/>
            <person name="Miki T."/>
            <person name="Mizobuchi K."/>
            <person name="Mori H."/>
            <person name="Mori T."/>
            <person name="Motomura K."/>
            <person name="Nakade S."/>
            <person name="Nakamura Y."/>
            <person name="Nashimoto H."/>
            <person name="Nishio Y."/>
            <person name="Oshima T."/>
            <person name="Saito N."/>
            <person name="Sampei G."/>
            <person name="Seki Y."/>
            <person name="Sivasundaram S."/>
            <person name="Tagami H."/>
            <person name="Takeda J."/>
            <person name="Takemoto K."/>
            <person name="Wada C."/>
            <person name="Yamamoto Y."/>
            <person name="Horiuchi T."/>
        </authorList>
    </citation>
    <scope>NUCLEOTIDE SEQUENCE [LARGE SCALE GENOMIC DNA]</scope>
    <source>
        <strain>K12 / W3110 / ATCC 27325 / DSM 5911</strain>
    </source>
</reference>
<reference key="3">
    <citation type="journal article" date="1997" name="Science">
        <title>The complete genome sequence of Escherichia coli K-12.</title>
        <authorList>
            <person name="Blattner F.R."/>
            <person name="Plunkett G. III"/>
            <person name="Bloch C.A."/>
            <person name="Perna N.T."/>
            <person name="Burland V."/>
            <person name="Riley M."/>
            <person name="Collado-Vides J."/>
            <person name="Glasner J.D."/>
            <person name="Rode C.K."/>
            <person name="Mayhew G.F."/>
            <person name="Gregor J."/>
            <person name="Davis N.W."/>
            <person name="Kirkpatrick H.A."/>
            <person name="Goeden M.A."/>
            <person name="Rose D.J."/>
            <person name="Mau B."/>
            <person name="Shao Y."/>
        </authorList>
    </citation>
    <scope>NUCLEOTIDE SEQUENCE [LARGE SCALE GENOMIC DNA]</scope>
    <source>
        <strain>K12 / MG1655 / ATCC 47076</strain>
    </source>
</reference>
<reference key="4">
    <citation type="journal article" date="2006" name="Mol. Syst. Biol.">
        <title>Highly accurate genome sequences of Escherichia coli K-12 strains MG1655 and W3110.</title>
        <authorList>
            <person name="Hayashi K."/>
            <person name="Morooka N."/>
            <person name="Yamamoto Y."/>
            <person name="Fujita K."/>
            <person name="Isono K."/>
            <person name="Choi S."/>
            <person name="Ohtsubo E."/>
            <person name="Baba T."/>
            <person name="Wanner B.L."/>
            <person name="Mori H."/>
            <person name="Horiuchi T."/>
        </authorList>
    </citation>
    <scope>NUCLEOTIDE SEQUENCE [LARGE SCALE GENOMIC DNA]</scope>
    <source>
        <strain>K12 / W3110 / ATCC 27325 / DSM 5911</strain>
    </source>
</reference>
<reference key="5">
    <citation type="journal article" date="1993" name="J. Biochem.">
        <title>Novel members of the two-component signal transduction genes in Escherichia coli.</title>
        <authorList>
            <person name="Nagasawa S."/>
            <person name="Ishige K."/>
            <person name="Mizuno T."/>
        </authorList>
    </citation>
    <scope>NUCLEOTIDE SEQUENCE [GENOMIC DNA] OF 381-471</scope>
    <source>
        <strain>K12</strain>
    </source>
</reference>
<reference key="6">
    <citation type="journal article" date="2002" name="J. Bacteriol.">
        <title>The baeSR two-component regulatory system activates transcription of the yegMNOB (mdtABCD) transporter gene cluster in Escherichia coli and increases its resistance to novobiocin and deoxycholate.</title>
        <authorList>
            <person name="Baranova N."/>
            <person name="Nikaido H."/>
        </authorList>
    </citation>
    <scope>INDUCTION</scope>
    <source>
        <strain>K12</strain>
    </source>
</reference>
<reference key="7">
    <citation type="journal article" date="2005" name="Science">
        <title>Global topology analysis of the Escherichia coli inner membrane proteome.</title>
        <authorList>
            <person name="Daley D.O."/>
            <person name="Rapp M."/>
            <person name="Granseth E."/>
            <person name="Melen K."/>
            <person name="Drew D."/>
            <person name="von Heijne G."/>
        </authorList>
    </citation>
    <scope>TOPOLOGY [LARGE SCALE ANALYSIS]</scope>
    <source>
        <strain>K12 / MG1655 / ATCC 47076</strain>
    </source>
</reference>
<name>MDTD_ECOLI</name>
<protein>
    <recommendedName>
        <fullName>Putative multidrug resistance protein MdtD</fullName>
    </recommendedName>
</protein>
<feature type="chain" id="PRO_0000173406" description="Putative multidrug resistance protein MdtD">
    <location>
        <begin position="1"/>
        <end position="471"/>
    </location>
</feature>
<feature type="topological domain" description="Periplasmic" evidence="1">
    <location>
        <begin position="1"/>
        <end position="11"/>
    </location>
</feature>
<feature type="transmembrane region" description="Helical" evidence="1">
    <location>
        <begin position="12"/>
        <end position="32"/>
    </location>
</feature>
<feature type="topological domain" description="Cytoplasmic" evidence="1">
    <location>
        <begin position="33"/>
        <end position="48"/>
    </location>
</feature>
<feature type="transmembrane region" description="Helical" evidence="1">
    <location>
        <begin position="49"/>
        <end position="69"/>
    </location>
</feature>
<feature type="topological domain" description="Periplasmic" evidence="1">
    <location>
        <begin position="70"/>
        <end position="76"/>
    </location>
</feature>
<feature type="transmembrane region" description="Helical" evidence="1">
    <location>
        <begin position="77"/>
        <end position="97"/>
    </location>
</feature>
<feature type="topological domain" description="Cytoplasmic" evidence="1">
    <location>
        <begin position="98"/>
        <end position="101"/>
    </location>
</feature>
<feature type="transmembrane region" description="Helical" evidence="1">
    <location>
        <begin position="102"/>
        <end position="124"/>
    </location>
</feature>
<feature type="topological domain" description="Periplasmic" evidence="1">
    <location>
        <begin position="125"/>
        <end position="137"/>
    </location>
</feature>
<feature type="transmembrane region" description="Helical" evidence="1">
    <location>
        <begin position="138"/>
        <end position="158"/>
    </location>
</feature>
<feature type="topological domain" description="Cytoplasmic" evidence="1">
    <location>
        <begin position="159"/>
        <end position="164"/>
    </location>
</feature>
<feature type="transmembrane region" description="Helical" evidence="1">
    <location>
        <begin position="165"/>
        <end position="185"/>
    </location>
</feature>
<feature type="topological domain" description="Periplasmic" evidence="1">
    <location>
        <begin position="186"/>
        <end position="196"/>
    </location>
</feature>
<feature type="transmembrane region" description="Helical" evidence="1">
    <location>
        <begin position="197"/>
        <end position="217"/>
    </location>
</feature>
<feature type="topological domain" description="Cytoplasmic" evidence="1">
    <location>
        <begin position="218"/>
        <end position="224"/>
    </location>
</feature>
<feature type="transmembrane region" description="Helical" evidence="1">
    <location>
        <begin position="225"/>
        <end position="245"/>
    </location>
</feature>
<feature type="topological domain" description="Periplasmic" evidence="1">
    <location>
        <begin position="246"/>
        <end position="262"/>
    </location>
</feature>
<feature type="transmembrane region" description="Helical" evidence="1">
    <location>
        <begin position="263"/>
        <end position="283"/>
    </location>
</feature>
<feature type="topological domain" description="Cytoplasmic" evidence="1">
    <location>
        <begin position="284"/>
        <end position="285"/>
    </location>
</feature>
<feature type="transmembrane region" description="Helical" evidence="1">
    <location>
        <begin position="286"/>
        <end position="306"/>
    </location>
</feature>
<feature type="topological domain" description="Periplasmic" evidence="1">
    <location>
        <begin position="307"/>
        <end position="341"/>
    </location>
</feature>
<feature type="transmembrane region" description="Helical" evidence="1">
    <location>
        <begin position="342"/>
        <end position="362"/>
    </location>
</feature>
<feature type="topological domain" description="Cytoplasmic" evidence="1">
    <location>
        <begin position="363"/>
        <end position="395"/>
    </location>
</feature>
<feature type="transmembrane region" description="Helical" evidence="1">
    <location>
        <begin position="396"/>
        <end position="416"/>
    </location>
</feature>
<feature type="topological domain" description="Periplasmic" evidence="1">
    <location>
        <begin position="417"/>
        <end position="430"/>
    </location>
</feature>
<feature type="transmembrane region" description="Helical" evidence="1">
    <location>
        <begin position="431"/>
        <end position="451"/>
    </location>
</feature>
<feature type="topological domain" description="Cytoplasmic" evidence="1">
    <location>
        <begin position="452"/>
        <end position="471"/>
    </location>
</feature>
<organism>
    <name type="scientific">Escherichia coli (strain K12)</name>
    <dbReference type="NCBI Taxonomy" id="83333"/>
    <lineage>
        <taxon>Bacteria</taxon>
        <taxon>Pseudomonadati</taxon>
        <taxon>Pseudomonadota</taxon>
        <taxon>Gammaproteobacteria</taxon>
        <taxon>Enterobacterales</taxon>
        <taxon>Enterobacteriaceae</taxon>
        <taxon>Escherichia</taxon>
    </lineage>
</organism>
<accession>P36554</accession>
<accession>P76400</accession>
<accession>Q54A55</accession>
<sequence>MTDLPDSTRWQLWIVAFGFFMQSLDTTIVNTALPSMAQSLGESPLHMHMVIVSYVLTVAVMLPASGWLADKVGVRNIFFTAIVLFTLGSLFCALSGTLNELLLARALQGVGGAMMVPVGRLTVMKIVPREQYMAAMTFVTLPGQVGPLLGPALGGLLVEYASWHWIFLINIPVGIIGAIATLLLMPNYTMQTRRFDLSGFLLLAVGMAVLTLALDGSKGTGLSPLTIAGLVAVGVVALVLYLLHARNNNRALFSLKLFRTRTFSLGLAGSFAGRIGSGMLPFMTPVFLQIGLGFSPFHAGLMMIPMVLGSMGMKRIVVQVVNRFGYRRVLVATTLGLSLVTLLFMTTALLGWYYVLPFVLFLQGMVNSTRFSSMNTLTLKDLPDNLASSGNSLLSMIMQLSMSIGVTIAGLLLGLFGSQHVSVDSGTTQTVFMYTWLSMALIIALPAFIFARVPNDTHQNVAISRRKRSAQ</sequence>
<proteinExistence type="evidence at protein level"/>
<evidence type="ECO:0000255" key="1"/>
<evidence type="ECO:0000269" key="2">
    <source>
    </source>
</evidence>
<evidence type="ECO:0000269" key="3">
    <source>
    </source>
</evidence>
<evidence type="ECO:0000305" key="4"/>
<comment type="subcellular location">
    <subcellularLocation>
        <location>Cell inner membrane</location>
        <topology>Multi-pass membrane protein</topology>
    </subcellularLocation>
</comment>
<comment type="induction">
    <text evidence="2 3">Transcriptionally regulated by BaeR.</text>
</comment>
<comment type="similarity">
    <text evidence="4">Belongs to the major facilitator superfamily. TCR/Tet family.</text>
</comment>
<keyword id="KW-0997">Cell inner membrane</keyword>
<keyword id="KW-1003">Cell membrane</keyword>
<keyword id="KW-0472">Membrane</keyword>
<keyword id="KW-1185">Reference proteome</keyword>
<keyword id="KW-0812">Transmembrane</keyword>
<keyword id="KW-1133">Transmembrane helix</keyword>
<keyword id="KW-0813">Transport</keyword>